<organism>
    <name type="scientific">Bacillus subtilis (strain 168)</name>
    <dbReference type="NCBI Taxonomy" id="224308"/>
    <lineage>
        <taxon>Bacteria</taxon>
        <taxon>Bacillati</taxon>
        <taxon>Bacillota</taxon>
        <taxon>Bacilli</taxon>
        <taxon>Bacillales</taxon>
        <taxon>Bacillaceae</taxon>
        <taxon>Bacillus</taxon>
    </lineage>
</organism>
<sequence>MNEVIKSLTDHRSIRSYTDEPVAQEQLDQIIEAVQSAPSSINGQQVTVITVQDKERKKKISELAGGQPWIDQAPVFLLFCADFNRAKIALEDLHDFKMEITNGLESVLVGAVDAGIALGTATAAAESLGLGTVPIGAVRGNPQELIELLELPKYVFPLSGLVIGHPADRSAKKPRLPQEAVNHQETYLNQDELTSHIQAYDEQMSEYMNKRTNGKETRNWSQSIASYYERLYYPHIREMLEKQGFKVEK</sequence>
<reference key="1">
    <citation type="journal article" date="1996" name="Microbiology">
        <title>The 25 degrees-36 degrees region of the Bacillus subtilis chromosome: determination of the sequence of a 146 kb segment and identification of 113 genes.</title>
        <authorList>
            <person name="Yamane K."/>
            <person name="Kumano M."/>
            <person name="Kurita K."/>
        </authorList>
    </citation>
    <scope>NUCLEOTIDE SEQUENCE [GENOMIC DNA]</scope>
    <source>
        <strain>168</strain>
    </source>
</reference>
<reference key="2">
    <citation type="submission" date="2001-09" db="EMBL/GenBank/DDBJ databases">
        <title>Molecular engineering of soluble bacterial proteins with chromate reductase activity.</title>
        <authorList>
            <person name="Park C.H."/>
            <person name="Gonzalez C.F."/>
            <person name="Ackerley D."/>
            <person name="Keyhan M."/>
            <person name="Matin A."/>
        </authorList>
    </citation>
    <scope>NUCLEOTIDE SEQUENCE [GENOMIC DNA]</scope>
</reference>
<reference key="3">
    <citation type="journal article" date="1997" name="Nature">
        <title>The complete genome sequence of the Gram-positive bacterium Bacillus subtilis.</title>
        <authorList>
            <person name="Kunst F."/>
            <person name="Ogasawara N."/>
            <person name="Moszer I."/>
            <person name="Albertini A.M."/>
            <person name="Alloni G."/>
            <person name="Azevedo V."/>
            <person name="Bertero M.G."/>
            <person name="Bessieres P."/>
            <person name="Bolotin A."/>
            <person name="Borchert S."/>
            <person name="Borriss R."/>
            <person name="Boursier L."/>
            <person name="Brans A."/>
            <person name="Braun M."/>
            <person name="Brignell S.C."/>
            <person name="Bron S."/>
            <person name="Brouillet S."/>
            <person name="Bruschi C.V."/>
            <person name="Caldwell B."/>
            <person name="Capuano V."/>
            <person name="Carter N.M."/>
            <person name="Choi S.-K."/>
            <person name="Codani J.-J."/>
            <person name="Connerton I.F."/>
            <person name="Cummings N.J."/>
            <person name="Daniel R.A."/>
            <person name="Denizot F."/>
            <person name="Devine K.M."/>
            <person name="Duesterhoeft A."/>
            <person name="Ehrlich S.D."/>
            <person name="Emmerson P.T."/>
            <person name="Entian K.-D."/>
            <person name="Errington J."/>
            <person name="Fabret C."/>
            <person name="Ferrari E."/>
            <person name="Foulger D."/>
            <person name="Fritz C."/>
            <person name="Fujita M."/>
            <person name="Fujita Y."/>
            <person name="Fuma S."/>
            <person name="Galizzi A."/>
            <person name="Galleron N."/>
            <person name="Ghim S.-Y."/>
            <person name="Glaser P."/>
            <person name="Goffeau A."/>
            <person name="Golightly E.J."/>
            <person name="Grandi G."/>
            <person name="Guiseppi G."/>
            <person name="Guy B.J."/>
            <person name="Haga K."/>
            <person name="Haiech J."/>
            <person name="Harwood C.R."/>
            <person name="Henaut A."/>
            <person name="Hilbert H."/>
            <person name="Holsappel S."/>
            <person name="Hosono S."/>
            <person name="Hullo M.-F."/>
            <person name="Itaya M."/>
            <person name="Jones L.-M."/>
            <person name="Joris B."/>
            <person name="Karamata D."/>
            <person name="Kasahara Y."/>
            <person name="Klaerr-Blanchard M."/>
            <person name="Klein C."/>
            <person name="Kobayashi Y."/>
            <person name="Koetter P."/>
            <person name="Koningstein G."/>
            <person name="Krogh S."/>
            <person name="Kumano M."/>
            <person name="Kurita K."/>
            <person name="Lapidus A."/>
            <person name="Lardinois S."/>
            <person name="Lauber J."/>
            <person name="Lazarevic V."/>
            <person name="Lee S.-M."/>
            <person name="Levine A."/>
            <person name="Liu H."/>
            <person name="Masuda S."/>
            <person name="Mauel C."/>
            <person name="Medigue C."/>
            <person name="Medina N."/>
            <person name="Mellado R.P."/>
            <person name="Mizuno M."/>
            <person name="Moestl D."/>
            <person name="Nakai S."/>
            <person name="Noback M."/>
            <person name="Noone D."/>
            <person name="O'Reilly M."/>
            <person name="Ogawa K."/>
            <person name="Ogiwara A."/>
            <person name="Oudega B."/>
            <person name="Park S.-H."/>
            <person name="Parro V."/>
            <person name="Pohl T.M."/>
            <person name="Portetelle D."/>
            <person name="Porwollik S."/>
            <person name="Prescott A.M."/>
            <person name="Presecan E."/>
            <person name="Pujic P."/>
            <person name="Purnelle B."/>
            <person name="Rapoport G."/>
            <person name="Rey M."/>
            <person name="Reynolds S."/>
            <person name="Rieger M."/>
            <person name="Rivolta C."/>
            <person name="Rocha E."/>
            <person name="Roche B."/>
            <person name="Rose M."/>
            <person name="Sadaie Y."/>
            <person name="Sato T."/>
            <person name="Scanlan E."/>
            <person name="Schleich S."/>
            <person name="Schroeter R."/>
            <person name="Scoffone F."/>
            <person name="Sekiguchi J."/>
            <person name="Sekowska A."/>
            <person name="Seror S.J."/>
            <person name="Serror P."/>
            <person name="Shin B.-S."/>
            <person name="Soldo B."/>
            <person name="Sorokin A."/>
            <person name="Tacconi E."/>
            <person name="Takagi T."/>
            <person name="Takahashi H."/>
            <person name="Takemaru K."/>
            <person name="Takeuchi M."/>
            <person name="Tamakoshi A."/>
            <person name="Tanaka T."/>
            <person name="Terpstra P."/>
            <person name="Tognoni A."/>
            <person name="Tosato V."/>
            <person name="Uchiyama S."/>
            <person name="Vandenbol M."/>
            <person name="Vannier F."/>
            <person name="Vassarotti A."/>
            <person name="Viari A."/>
            <person name="Wambutt R."/>
            <person name="Wedler E."/>
            <person name="Wedler H."/>
            <person name="Weitzenegger T."/>
            <person name="Winters P."/>
            <person name="Wipat A."/>
            <person name="Yamamoto H."/>
            <person name="Yamane K."/>
            <person name="Yasumoto K."/>
            <person name="Yata K."/>
            <person name="Yoshida K."/>
            <person name="Yoshikawa H.-F."/>
            <person name="Zumstein E."/>
            <person name="Yoshikawa H."/>
            <person name="Danchin A."/>
        </authorList>
    </citation>
    <scope>NUCLEOTIDE SEQUENCE [LARGE SCALE GENOMIC DNA]</scope>
    <source>
        <strain>168</strain>
    </source>
</reference>
<reference key="4">
    <citation type="journal article" date="2007" name="Proteomics">
        <title>Transcriptome and proteome analyses in response to 2-methylhydroquinone and 6-brom-2-vinyl-chroman-4-on reveal different degradation systems involved in the catabolism of aromatic compounds in Bacillus subtilis.</title>
        <authorList>
            <person name="Nguyen V.D."/>
            <person name="Wolf C."/>
            <person name="Maeder U."/>
            <person name="Lalk M."/>
            <person name="Langer P."/>
            <person name="Lindequist U."/>
            <person name="Hecker M."/>
            <person name="Antelmann H."/>
        </authorList>
    </citation>
    <scope>INDUCTION</scope>
    <source>
        <strain>168</strain>
    </source>
</reference>
<reference key="5">
    <citation type="journal article" date="2005" name="Biochemistry">
        <title>Structure and function of YcnD from Bacillus subtilis, a flavin-containing oxidoreductase.</title>
        <authorList>
            <person name="Morokutti A."/>
            <person name="Lyskowski A."/>
            <person name="Sollner S."/>
            <person name="Pointner E."/>
            <person name="Fitzpatrick T.B."/>
            <person name="Kratky C."/>
            <person name="Gruber K."/>
            <person name="Macheroux P."/>
        </authorList>
    </citation>
    <scope>X-RAY CRYSTALLOGRAPHY (1.85 ANGSTROMS) IN COMPLEX WITH FMN</scope>
    <scope>FUNCTION</scope>
    <scope>CATALYTIC ACTIVITY</scope>
    <scope>BIOPHYSICOCHEMICAL PROPERTIES</scope>
    <scope>SUBSTRATE SPECIFICITY</scope>
    <scope>NOMENCLATURE</scope>
    <scope>ACTIVITY REGULATION</scope>
    <scope>SUBUNIT</scope>
    <source>
        <strain>168</strain>
    </source>
</reference>
<name>NFRA2_BACSU</name>
<feature type="chain" id="PRO_0000205513" description="FMN reductase [NAD(P)H]">
    <location>
        <begin position="1"/>
        <end position="249"/>
    </location>
</feature>
<feature type="binding site">
    <location>
        <begin position="11"/>
        <end position="15"/>
    </location>
    <ligand>
        <name>FMN</name>
        <dbReference type="ChEBI" id="CHEBI:58210"/>
    </ligand>
</feature>
<feature type="binding site" evidence="1">
    <location>
        <position position="67"/>
    </location>
    <ligand>
        <name>FMN</name>
        <dbReference type="ChEBI" id="CHEBI:58210"/>
    </ligand>
</feature>
<feature type="binding site">
    <location>
        <begin position="134"/>
        <end position="136"/>
    </location>
    <ligand>
        <name>FMN</name>
        <dbReference type="ChEBI" id="CHEBI:58210"/>
    </ligand>
</feature>
<feature type="binding site">
    <location>
        <begin position="173"/>
        <end position="175"/>
    </location>
    <ligand>
        <name>FMN</name>
        <dbReference type="ChEBI" id="CHEBI:58210"/>
    </ligand>
</feature>
<feature type="helix" evidence="4">
    <location>
        <begin position="3"/>
        <end position="9"/>
    </location>
</feature>
<feature type="helix" evidence="4">
    <location>
        <begin position="24"/>
        <end position="36"/>
    </location>
</feature>
<feature type="helix" evidence="4">
    <location>
        <begin position="40"/>
        <end position="42"/>
    </location>
</feature>
<feature type="strand" evidence="4">
    <location>
        <begin position="46"/>
        <end position="51"/>
    </location>
</feature>
<feature type="helix" evidence="4">
    <location>
        <begin position="54"/>
        <end position="63"/>
    </location>
</feature>
<feature type="helix" evidence="4">
    <location>
        <begin position="68"/>
        <end position="72"/>
    </location>
</feature>
<feature type="strand" evidence="4">
    <location>
        <begin position="73"/>
        <end position="82"/>
    </location>
</feature>
<feature type="helix" evidence="4">
    <location>
        <begin position="84"/>
        <end position="94"/>
    </location>
</feature>
<feature type="helix" evidence="4">
    <location>
        <begin position="100"/>
        <end position="102"/>
    </location>
</feature>
<feature type="helix" evidence="4">
    <location>
        <begin position="104"/>
        <end position="127"/>
    </location>
</feature>
<feature type="strand" evidence="4">
    <location>
        <begin position="131"/>
        <end position="135"/>
    </location>
</feature>
<feature type="helix" evidence="4">
    <location>
        <begin position="136"/>
        <end position="139"/>
    </location>
</feature>
<feature type="helix" evidence="4">
    <location>
        <begin position="142"/>
        <end position="148"/>
    </location>
</feature>
<feature type="strand" evidence="4">
    <location>
        <begin position="155"/>
        <end position="164"/>
    </location>
</feature>
<feature type="helix" evidence="4">
    <location>
        <begin position="178"/>
        <end position="181"/>
    </location>
</feature>
<feature type="strand" evidence="4">
    <location>
        <begin position="184"/>
        <end position="186"/>
    </location>
</feature>
<feature type="helix" evidence="4">
    <location>
        <begin position="190"/>
        <end position="212"/>
    </location>
</feature>
<feature type="helix" evidence="4">
    <location>
        <begin position="220"/>
        <end position="228"/>
    </location>
</feature>
<feature type="helix" evidence="4">
    <location>
        <begin position="236"/>
        <end position="242"/>
    </location>
</feature>
<protein>
    <recommendedName>
        <fullName>FMN reductase [NAD(P)H]</fullName>
        <ecNumber evidence="1">1.5.1.39</ecNumber>
    </recommendedName>
    <alternativeName>
        <fullName>NAD(P)H-dependent FMN reductase</fullName>
    </alternativeName>
    <alternativeName>
        <fullName>NAD(P)H-dependent nitro/flavin reductase</fullName>
    </alternativeName>
    <alternativeName>
        <fullName>NAD(P)H-dependent nitroreductase</fullName>
    </alternativeName>
    <alternativeName>
        <fullName>NAD(P)H-dependent oxidoreductase</fullName>
    </alternativeName>
</protein>
<dbReference type="EC" id="1.5.1.39" evidence="1"/>
<dbReference type="EMBL" id="D50453">
    <property type="protein sequence ID" value="BAA09018.1"/>
    <property type="molecule type" value="Genomic_DNA"/>
</dbReference>
<dbReference type="EMBL" id="AF417208">
    <property type="protein sequence ID" value="AAL09698.1"/>
    <property type="molecule type" value="Genomic_DNA"/>
</dbReference>
<dbReference type="EMBL" id="AL009126">
    <property type="protein sequence ID" value="CAB12194.1"/>
    <property type="molecule type" value="Genomic_DNA"/>
</dbReference>
<dbReference type="PIR" id="H69763">
    <property type="entry name" value="H69763"/>
</dbReference>
<dbReference type="PDB" id="1ZCH">
    <property type="method" value="X-ray"/>
    <property type="resolution" value="1.85 A"/>
    <property type="chains" value="A=1-249"/>
</dbReference>
<dbReference type="PDBsum" id="1ZCH"/>
<dbReference type="SMR" id="P94424"/>
<dbReference type="FunCoup" id="P94424">
    <property type="interactions" value="111"/>
</dbReference>
<dbReference type="STRING" id="224308.BSU03860"/>
<dbReference type="PaxDb" id="224308-BSU03860"/>
<dbReference type="EnsemblBacteria" id="CAB12194">
    <property type="protein sequence ID" value="CAB12194"/>
    <property type="gene ID" value="BSU_03860"/>
</dbReference>
<dbReference type="GeneID" id="938267"/>
<dbReference type="KEGG" id="bsu:BSU03860"/>
<dbReference type="PATRIC" id="fig|224308.179.peg.409"/>
<dbReference type="eggNOG" id="COG0778">
    <property type="taxonomic scope" value="Bacteria"/>
</dbReference>
<dbReference type="InParanoid" id="P94424"/>
<dbReference type="OrthoDB" id="9775805at2"/>
<dbReference type="PhylomeDB" id="P94424"/>
<dbReference type="BioCyc" id="BSUB:BSU03860-MONOMER"/>
<dbReference type="SABIO-RK" id="P94424"/>
<dbReference type="EvolutionaryTrace" id="P94424"/>
<dbReference type="Proteomes" id="UP000001570">
    <property type="component" value="Chromosome"/>
</dbReference>
<dbReference type="GO" id="GO:0052874">
    <property type="term" value="F:FMN reductase (NADH) activity"/>
    <property type="evidence" value="ECO:0007669"/>
    <property type="project" value="RHEA"/>
</dbReference>
<dbReference type="GO" id="GO:0052873">
    <property type="term" value="F:FMN reductase (NADPH) activity"/>
    <property type="evidence" value="ECO:0007669"/>
    <property type="project" value="RHEA"/>
</dbReference>
<dbReference type="GO" id="GO:0008752">
    <property type="term" value="F:FMN reductase [NAD(P)H] activity"/>
    <property type="evidence" value="ECO:0007669"/>
    <property type="project" value="UniProtKB-EC"/>
</dbReference>
<dbReference type="GO" id="GO:0009056">
    <property type="term" value="P:catabolic process"/>
    <property type="evidence" value="ECO:0007669"/>
    <property type="project" value="UniProtKB-KW"/>
</dbReference>
<dbReference type="GO" id="GO:0009636">
    <property type="term" value="P:response to toxic substance"/>
    <property type="evidence" value="ECO:0007669"/>
    <property type="project" value="UniProtKB-KW"/>
</dbReference>
<dbReference type="CDD" id="cd02146">
    <property type="entry name" value="NfsA-like"/>
    <property type="match status" value="1"/>
</dbReference>
<dbReference type="Gene3D" id="3.40.109.10">
    <property type="entry name" value="NADH Oxidase"/>
    <property type="match status" value="1"/>
</dbReference>
<dbReference type="InterPro" id="IPR016446">
    <property type="entry name" value="Flavin_OxRdtase_Frp"/>
</dbReference>
<dbReference type="InterPro" id="IPR029479">
    <property type="entry name" value="Nitroreductase"/>
</dbReference>
<dbReference type="InterPro" id="IPR000415">
    <property type="entry name" value="Nitroreductase-like"/>
</dbReference>
<dbReference type="NCBIfam" id="NF008033">
    <property type="entry name" value="PRK10765.1"/>
    <property type="match status" value="1"/>
</dbReference>
<dbReference type="PANTHER" id="PTHR43425">
    <property type="entry name" value="OXYGEN-INSENSITIVE NADPH NITROREDUCTASE"/>
    <property type="match status" value="1"/>
</dbReference>
<dbReference type="PANTHER" id="PTHR43425:SF2">
    <property type="entry name" value="OXYGEN-INSENSITIVE NADPH NITROREDUCTASE"/>
    <property type="match status" value="1"/>
</dbReference>
<dbReference type="Pfam" id="PF00881">
    <property type="entry name" value="Nitroreductase"/>
    <property type="match status" value="1"/>
</dbReference>
<dbReference type="PIRSF" id="PIRSF005426">
    <property type="entry name" value="Frp"/>
    <property type="match status" value="1"/>
</dbReference>
<dbReference type="SUPFAM" id="SSF55469">
    <property type="entry name" value="FMN-dependent nitroreductase-like"/>
    <property type="match status" value="1"/>
</dbReference>
<proteinExistence type="evidence at protein level"/>
<keyword id="KW-0002">3D-structure</keyword>
<keyword id="KW-0058">Aromatic hydrocarbons catabolism</keyword>
<keyword id="KW-0216">Detoxification</keyword>
<keyword id="KW-0285">Flavoprotein</keyword>
<keyword id="KW-0288">FMN</keyword>
<keyword id="KW-0520">NAD</keyword>
<keyword id="KW-0560">Oxidoreductase</keyword>
<keyword id="KW-1185">Reference proteome</keyword>
<evidence type="ECO:0000269" key="1">
    <source>
    </source>
</evidence>
<evidence type="ECO:0000269" key="2">
    <source>
    </source>
</evidence>
<evidence type="ECO:0000305" key="3"/>
<evidence type="ECO:0007829" key="4">
    <source>
        <dbReference type="PDB" id="1ZCH"/>
    </source>
</evidence>
<comment type="function">
    <text evidence="1">Reduces FMNH(2) to FMN, with NADH or NADPH as reductant. It also reduces nitroaromatic compounds, quinones, chromates and azo dyes. It could supply the reduced form of FMN to luciferase-like protein and contribute to the degradation of aromatic compounds.</text>
</comment>
<comment type="catalytic activity">
    <reaction evidence="1">
        <text>FMNH2 + NADP(+) = FMN + NADPH + 2 H(+)</text>
        <dbReference type="Rhea" id="RHEA:21624"/>
        <dbReference type="ChEBI" id="CHEBI:15378"/>
        <dbReference type="ChEBI" id="CHEBI:57618"/>
        <dbReference type="ChEBI" id="CHEBI:57783"/>
        <dbReference type="ChEBI" id="CHEBI:58210"/>
        <dbReference type="ChEBI" id="CHEBI:58349"/>
        <dbReference type="EC" id="1.5.1.39"/>
    </reaction>
</comment>
<comment type="catalytic activity">
    <reaction evidence="1">
        <text>FMNH2 + NAD(+) = FMN + NADH + 2 H(+)</text>
        <dbReference type="Rhea" id="RHEA:21620"/>
        <dbReference type="ChEBI" id="CHEBI:15378"/>
        <dbReference type="ChEBI" id="CHEBI:57540"/>
        <dbReference type="ChEBI" id="CHEBI:57618"/>
        <dbReference type="ChEBI" id="CHEBI:57945"/>
        <dbReference type="ChEBI" id="CHEBI:58210"/>
        <dbReference type="EC" id="1.5.1.39"/>
    </reaction>
</comment>
<comment type="activity regulation">
    <text evidence="1">FMN is a competitive inhibitor of NADH, and therefore leads to the preferential utilization of NADPH.</text>
</comment>
<comment type="biophysicochemical properties">
    <kinetics>
        <KM evidence="1">0.2 uM for 4-nitrophenol (NP)(at pH 8 and 25 degrees Celsius)</KM>
        <KM evidence="1">0.7 uM for 5-nitro-2-furaldehyde semicarbazone (NF)(at pH 8 and 25 degrees Celsius)</KM>
        <KM evidence="1">4.2 uM for FMN (at pH 8 and 25 degrees Celsius)</KM>
        <KM evidence="1">4.4 uM for NADPH (at pH 8 and 25 degrees Celsius)</KM>
        <KM evidence="1">5 uM for chromate (at pH 8 and 25 degrees Celsius)</KM>
        <KM evidence="1">6.4 uM for NADH (at pH 8 and 25 degrees Celsius)</KM>
        <KM evidence="1">96 uM for methyl-4-nitrobenzenesulfonate (NBS)(at pH 8 and 25 degrees Celsius)</KM>
        <Vmax evidence="1">0.9 umol/min/mg enzyme with chromate as substrate (at pH 8 and 25 degrees Celsius)</Vmax>
        <Vmax evidence="1">4.0 umol/min/mg enzyme with 5-nitro-2-furaldehyde semicarbazone (nitrofurazone, NF) as substrate (at pH 8 and 25 degrees Celsius)</Vmax>
        <Vmax evidence="1">7.0 umol/min/mg enzyme with 4-nitrophenol (NP) as substrate (at pH 8 and 25 degrees Celsius)</Vmax>
        <Vmax evidence="1">73.6 umol/min/mg enzyme with methyl-4-nitrobenzenesulfonate (NBS) as substrate (at pH 8 and 25 degrees Celsius)</Vmax>
        <Vmax evidence="1">200.0 umol/min/mg enzyme with FMN as substrate</Vmax>
    </kinetics>
</comment>
<comment type="subunit">
    <text evidence="1">Homodimer.</text>
</comment>
<comment type="induction">
    <text evidence="2">Strongly induced by stress due to exposure to 6-brom-2-vinyl-chroman-4-on (chromanon) and less strongly induced after exposure to 2-methylhydroquinone (2-MHQ) or catechol stress.</text>
</comment>
<comment type="miscellaneous">
    <text>Catalysis proceeds by a classical ping-pong bi-bi reaction mechanism. The reduction of nitro-organic compounds and inorganic chromate occur in the absence of external FMN and are therefore believed to require binding of these substrates in the active site. In contrast to these reduction processes, azo dyes are reduced only in the presence of external FMN, indicating that azo dye reduction occurs outside the active site of the enzyme.</text>
</comment>
<comment type="similarity">
    <text evidence="3">Belongs to the flavin oxidoreductase frp family.</text>
</comment>
<accession>P94424</accession>
<accession>Q548A6</accession>
<gene>
    <name type="primary">nfrA2</name>
    <name type="synonym">ycnD</name>
    <name type="ordered locus">BSU03860</name>
</gene>